<sequence length="303" mass="34363">MPTTAAFLRALYILTTLRGIGTSHEVRNIKHGSESSASRARFLLHTLVIIAAKYLVLDMMTFQPPSPEDTDRMFGEGKEYLLFRPDGLPPPKMQDILTNLGVTLLGWGPIGSWFIEVHYRILSVASVGLGISQPHQWPPLFGSITEAHTLRRFWANFWHQLFRWPMQGLSSFLCRDVLRLPRPSLAERYLKITLVFAISSCLHLAIDGRAGIMLPRSGALRCFLLQPVGIILEDGAQALYRRLRGDAPLSKWTRAVGYIWTWAFLSLVAPMYNFPLFRYQDPARNGVPVPVLRPAMEYFRVKG</sequence>
<protein>
    <recommendedName>
        <fullName evidence="4">Acetyltransferase ataH</fullName>
        <ecNumber evidence="6">2.3.1.-</ecNumber>
    </recommendedName>
    <alternativeName>
        <fullName evidence="4">Acetylaranotin biosynthesis cluster protein H</fullName>
    </alternativeName>
</protein>
<keyword id="KW-0012">Acyltransferase</keyword>
<keyword id="KW-0472">Membrane</keyword>
<keyword id="KW-1185">Reference proteome</keyword>
<keyword id="KW-0732">Signal</keyword>
<keyword id="KW-0808">Transferase</keyword>
<keyword id="KW-0812">Transmembrane</keyword>
<keyword id="KW-1133">Transmembrane helix</keyword>
<reference key="1">
    <citation type="submission" date="2005-09" db="EMBL/GenBank/DDBJ databases">
        <title>Annotation of the Aspergillus terreus NIH2624 genome.</title>
        <authorList>
            <person name="Birren B.W."/>
            <person name="Lander E.S."/>
            <person name="Galagan J.E."/>
            <person name="Nusbaum C."/>
            <person name="Devon K."/>
            <person name="Henn M."/>
            <person name="Ma L.-J."/>
            <person name="Jaffe D.B."/>
            <person name="Butler J."/>
            <person name="Alvarez P."/>
            <person name="Gnerre S."/>
            <person name="Grabherr M."/>
            <person name="Kleber M."/>
            <person name="Mauceli E.W."/>
            <person name="Brockman W."/>
            <person name="Rounsley S."/>
            <person name="Young S.K."/>
            <person name="LaButti K."/>
            <person name="Pushparaj V."/>
            <person name="DeCaprio D."/>
            <person name="Crawford M."/>
            <person name="Koehrsen M."/>
            <person name="Engels R."/>
            <person name="Montgomery P."/>
            <person name="Pearson M."/>
            <person name="Howarth C."/>
            <person name="Larson L."/>
            <person name="Luoma S."/>
            <person name="White J."/>
            <person name="Alvarado L."/>
            <person name="Kodira C.D."/>
            <person name="Zeng Q."/>
            <person name="Oleary S."/>
            <person name="Yandava C."/>
            <person name="Denning D.W."/>
            <person name="Nierman W.C."/>
            <person name="Milne T."/>
            <person name="Madden K."/>
        </authorList>
    </citation>
    <scope>NUCLEOTIDE SEQUENCE [LARGE SCALE GENOMIC DNA]</scope>
    <source>
        <strain>NIH 2624 / FGSC A1156</strain>
    </source>
</reference>
<reference key="2">
    <citation type="journal article" date="2013" name="J. Am. Chem. Soc.">
        <title>Biosynthetic pathway for the epipolythiodioxopiperazine acetylaranotin in Aspergillus terreus revealed by genome-based deletion analysis.</title>
        <authorList>
            <person name="Guo C.J."/>
            <person name="Yeh H.H."/>
            <person name="Chiang Y.M."/>
            <person name="Sanchez J.F."/>
            <person name="Chang S.L."/>
            <person name="Bruno K.S."/>
            <person name="Wang C.C."/>
        </authorList>
    </citation>
    <scope>FUNCTION</scope>
    <scope>DISRUPTION PHENOTYPE</scope>
    <scope>PATHWAY</scope>
</reference>
<reference key="3">
    <citation type="journal article" date="2018" name="Fungal Genet. Biol.">
        <title>Genome-based deletion analysis in Aspergillus terreus reveals the acetylaranotin bis-thiomethyltransferase gene.</title>
        <authorList>
            <person name="Sun W.W."/>
            <person name="Romsdahl J."/>
            <person name="Guo C.J."/>
            <person name="Wang C.C.C."/>
        </authorList>
    </citation>
    <scope>FUNCTION</scope>
    <scope>DISRUPTION PHENOTYPE</scope>
</reference>
<accession>Q0CS68</accession>
<organism>
    <name type="scientific">Aspergillus terreus (strain NIH 2624 / FGSC A1156)</name>
    <dbReference type="NCBI Taxonomy" id="341663"/>
    <lineage>
        <taxon>Eukaryota</taxon>
        <taxon>Fungi</taxon>
        <taxon>Dikarya</taxon>
        <taxon>Ascomycota</taxon>
        <taxon>Pezizomycotina</taxon>
        <taxon>Eurotiomycetes</taxon>
        <taxon>Eurotiomycetidae</taxon>
        <taxon>Eurotiales</taxon>
        <taxon>Aspergillaceae</taxon>
        <taxon>Aspergillus</taxon>
        <taxon>Aspergillus subgen. Circumdati</taxon>
    </lineage>
</organism>
<evidence type="ECO:0000255" key="1"/>
<evidence type="ECO:0000269" key="2">
    <source>
    </source>
</evidence>
<evidence type="ECO:0000269" key="3">
    <source>
    </source>
</evidence>
<evidence type="ECO:0000303" key="4">
    <source>
    </source>
</evidence>
<evidence type="ECO:0000305" key="5"/>
<evidence type="ECO:0000305" key="6">
    <source>
    </source>
</evidence>
<name>ATAH_ASPTN</name>
<proteinExistence type="inferred from homology"/>
<comment type="function">
    <text evidence="2 3">Acetyltransferase; part of the gene cluster that mediates the biosynthesis of acetylaranotin, a member of the epipolythiodioxopiperazine (ETP) class of toxins characterized by a disulfide-bridged cyclic dipeptide (PubMed:23586797). The first step of acetylaranotin biosynthesis is performed by the NRPS ataP which produces diketopiperazine cyclo-L-Phe-L-Phe via the condensation of 2 phenylalanines (L-Phe) (PubMed:23586797). The ataC domain of ataTC then catalyzes the formation of bishydroxylation of cyclo-L-Phe-L-Phe (PubMed:23586797). The glutathione S-transferase domain ataG in ataIMG further catalyzes the conjugation of two glutathiones to the bishydroxylated intermediate (PubMed:23586797). Next, the dipeptidase ataJ removes the Glu residues (PubMed:23586797). The following step is performed by the carbon sulfur lyase domain ataI of ataIMG which may convert the bis-cysteinyl adduct to yield an epidithiol intermediate (PubMed:23586797). The ataT domain from ataTC then catalyzes the oxidation of the free dithiols, followed by a cyclization step catalyzed by the cytochrome P450 ataF (PubMed:23586797). AtaF probably acts as an epoxidase to promote a dual epoxidation formation at C8 and C9 along with C8' and C9', followed by the spontaneous nucleophilic attack of the amide nitrogens N10 and N10' to yield an intermediate with the pyrrolidine partial structure (PubMed:23586797). The final steps of acetylaranotin biosynthesis involve the acetylation and ring rearrangement of an epitetrathiodiketopiperazine intermediate to produce acetylaranotin (PubMed:23586797). AtaH probably catalyzes the acetylation of epitetrathiodiketopiperazine to produce a diacetate and ataY is responsible for the formation of the dihydrooxepin moiety that converts the diacetate intermediate to acetylaranotin via acetylapoaranotin (PubMed:23586797). Both enzymes could function independently in the absence of the other (PubMed:23586797). The acetylaranotin bis-thiomethyltransferase ataS located outside of acetylaranotin gene cluster is the main thiomethyltransferase responsible for converting acetylaranotin and its related intermediates to their methylated forms (PubMed:30096370).</text>
</comment>
<comment type="pathway">
    <text evidence="2">Mycotoxin biosynthesis.</text>
</comment>
<comment type="subcellular location">
    <subcellularLocation>
        <location evidence="1">Membrane</location>
        <topology evidence="1">Multi-pass membrane protein</topology>
    </subcellularLocation>
</comment>
<comment type="disruption phenotype">
    <text evidence="2 3">Impairs the production of acetylaranotin and accumulates chemically stable intermediates or shunt products such as bisdethiobis(methylthio)-deacetylapoaranotin and bisdethiobis(methylthio)-deactylaranotin (PubMed:23586797, PubMed:30096370). Also leads to the accumulation of deacetylhaematocin and demethyl-deacetylhaematocin when ataS and ataY are also deleted (PubMed:30096370).</text>
</comment>
<comment type="similarity">
    <text evidence="5">Belongs to the wax synthase family.</text>
</comment>
<gene>
    <name evidence="4" type="primary">ataH</name>
    <name type="ORF">ATEG_03466</name>
</gene>
<dbReference type="EC" id="2.3.1.-" evidence="6"/>
<dbReference type="EMBL" id="CH476597">
    <property type="protein sequence ID" value="EAU36740.1"/>
    <property type="molecule type" value="Genomic_DNA"/>
</dbReference>
<dbReference type="RefSeq" id="XP_001212644.1">
    <property type="nucleotide sequence ID" value="XM_001212644.1"/>
</dbReference>
<dbReference type="STRING" id="341663.Q0CS68"/>
<dbReference type="EnsemblFungi" id="EAU36740">
    <property type="protein sequence ID" value="EAU36740"/>
    <property type="gene ID" value="ATEG_03466"/>
</dbReference>
<dbReference type="GeneID" id="4317800"/>
<dbReference type="VEuPathDB" id="FungiDB:ATEG_03466"/>
<dbReference type="eggNOG" id="ENOG502SI5I">
    <property type="taxonomic scope" value="Eukaryota"/>
</dbReference>
<dbReference type="HOGENOM" id="CLU_032731_0_1_1"/>
<dbReference type="OMA" id="FRHIGTP"/>
<dbReference type="OrthoDB" id="1077582at2759"/>
<dbReference type="Proteomes" id="UP000007963">
    <property type="component" value="Unassembled WGS sequence"/>
</dbReference>
<dbReference type="GO" id="GO:0016020">
    <property type="term" value="C:membrane"/>
    <property type="evidence" value="ECO:0007669"/>
    <property type="project" value="UniProtKB-SubCell"/>
</dbReference>
<dbReference type="GO" id="GO:0008374">
    <property type="term" value="F:O-acyltransferase activity"/>
    <property type="evidence" value="ECO:0007669"/>
    <property type="project" value="InterPro"/>
</dbReference>
<dbReference type="GO" id="GO:0006629">
    <property type="term" value="P:lipid metabolic process"/>
    <property type="evidence" value="ECO:0007669"/>
    <property type="project" value="InterPro"/>
</dbReference>
<dbReference type="InterPro" id="IPR044851">
    <property type="entry name" value="Wax_synthase"/>
</dbReference>
<dbReference type="InterPro" id="IPR032805">
    <property type="entry name" value="Wax_synthase_dom"/>
</dbReference>
<dbReference type="PANTHER" id="PTHR31595">
    <property type="entry name" value="LONG-CHAIN-ALCOHOL O-FATTY-ACYLTRANSFERASE 3-RELATED"/>
    <property type="match status" value="1"/>
</dbReference>
<dbReference type="PANTHER" id="PTHR31595:SF27">
    <property type="entry name" value="WAX SYNTHASE DOMAIN-CONTAINING PROTEIN-RELATED"/>
    <property type="match status" value="1"/>
</dbReference>
<dbReference type="Pfam" id="PF13813">
    <property type="entry name" value="MBOAT_2"/>
    <property type="match status" value="1"/>
</dbReference>
<feature type="signal peptide" evidence="1">
    <location>
        <begin position="1"/>
        <end position="23"/>
    </location>
</feature>
<feature type="chain" id="PRO_0000440657" description="Acetyltransferase ataH">
    <location>
        <begin position="24"/>
        <end position="303"/>
    </location>
</feature>
<feature type="transmembrane region" description="Helical" evidence="1">
    <location>
        <begin position="42"/>
        <end position="62"/>
    </location>
</feature>
<feature type="transmembrane region" description="Helical" evidence="1">
    <location>
        <begin position="194"/>
        <end position="214"/>
    </location>
</feature>
<feature type="transmembrane region" description="Helical" evidence="1">
    <location>
        <begin position="257"/>
        <end position="277"/>
    </location>
</feature>